<name>RS4_NITV4</name>
<comment type="function">
    <text evidence="1">One of the primary rRNA binding proteins, it binds directly to 16S rRNA where it nucleates assembly of the body of the 30S subunit.</text>
</comment>
<comment type="function">
    <text evidence="1">With S5 and S12 plays an important role in translational accuracy.</text>
</comment>
<comment type="subunit">
    <text evidence="1">Part of the 30S ribosomal subunit. Contacts protein S5. The interaction surface between S4 and S5 is involved in control of translational fidelity.</text>
</comment>
<comment type="similarity">
    <text evidence="1">Belongs to the universal ribosomal protein uS4 family.</text>
</comment>
<accession>A1VE91</accession>
<proteinExistence type="inferred from homology"/>
<reference key="1">
    <citation type="journal article" date="2009" name="Environ. Microbiol.">
        <title>Contribution of mobile genetic elements to Desulfovibrio vulgaris genome plasticity.</title>
        <authorList>
            <person name="Walker C.B."/>
            <person name="Stolyar S."/>
            <person name="Chivian D."/>
            <person name="Pinel N."/>
            <person name="Gabster J.A."/>
            <person name="Dehal P.S."/>
            <person name="He Z."/>
            <person name="Yang Z.K."/>
            <person name="Yen H.C."/>
            <person name="Zhou J."/>
            <person name="Wall J.D."/>
            <person name="Hazen T.C."/>
            <person name="Arkin A.P."/>
            <person name="Stahl D.A."/>
        </authorList>
    </citation>
    <scope>NUCLEOTIDE SEQUENCE [LARGE SCALE GENOMIC DNA]</scope>
    <source>
        <strain>DP4</strain>
    </source>
</reference>
<sequence>MAKYTDAKCRQCRREGTKLFLKGDRCFTDKCAFDRRPYAPGQHGRARKKVSDYAVQLREKQKVRRMYGILEQQFHAYFTKADMAKGVTGANLLSLLERRLDNVIYRLGFANSRNQARQLVRHGIFTLNGRKVNIPSLQVRIGDTIEVPEKSRKIPVLAEAQEVIARRGCPAWLEADGANFRGVVKALPQREDIQFPINEHLIVELYSK</sequence>
<evidence type="ECO:0000255" key="1">
    <source>
        <dbReference type="HAMAP-Rule" id="MF_01306"/>
    </source>
</evidence>
<evidence type="ECO:0000305" key="2"/>
<gene>
    <name evidence="1" type="primary">rpsD</name>
    <name type="ordered locus">Dvul_1740</name>
</gene>
<keyword id="KW-0687">Ribonucleoprotein</keyword>
<keyword id="KW-0689">Ribosomal protein</keyword>
<keyword id="KW-0694">RNA-binding</keyword>
<keyword id="KW-0699">rRNA-binding</keyword>
<feature type="chain" id="PRO_0000293271" description="Small ribosomal subunit protein uS4">
    <location>
        <begin position="1"/>
        <end position="208"/>
    </location>
</feature>
<feature type="domain" description="S4 RNA-binding" evidence="1">
    <location>
        <begin position="98"/>
        <end position="161"/>
    </location>
</feature>
<organism>
    <name type="scientific">Nitratidesulfovibrio vulgaris (strain DP4)</name>
    <name type="common">Desulfovibrio vulgaris</name>
    <dbReference type="NCBI Taxonomy" id="391774"/>
    <lineage>
        <taxon>Bacteria</taxon>
        <taxon>Pseudomonadati</taxon>
        <taxon>Thermodesulfobacteriota</taxon>
        <taxon>Desulfovibrionia</taxon>
        <taxon>Desulfovibrionales</taxon>
        <taxon>Desulfovibrionaceae</taxon>
        <taxon>Nitratidesulfovibrio</taxon>
    </lineage>
</organism>
<dbReference type="EMBL" id="CP000527">
    <property type="protein sequence ID" value="ABM28757.1"/>
    <property type="molecule type" value="Genomic_DNA"/>
</dbReference>
<dbReference type="RefSeq" id="WP_010938623.1">
    <property type="nucleotide sequence ID" value="NC_008751.1"/>
</dbReference>
<dbReference type="SMR" id="A1VE91"/>
<dbReference type="KEGG" id="dvl:Dvul_1740"/>
<dbReference type="HOGENOM" id="CLU_092403_0_2_7"/>
<dbReference type="Proteomes" id="UP000009173">
    <property type="component" value="Chromosome"/>
</dbReference>
<dbReference type="GO" id="GO:0015935">
    <property type="term" value="C:small ribosomal subunit"/>
    <property type="evidence" value="ECO:0007669"/>
    <property type="project" value="InterPro"/>
</dbReference>
<dbReference type="GO" id="GO:0019843">
    <property type="term" value="F:rRNA binding"/>
    <property type="evidence" value="ECO:0007669"/>
    <property type="project" value="UniProtKB-UniRule"/>
</dbReference>
<dbReference type="GO" id="GO:0003735">
    <property type="term" value="F:structural constituent of ribosome"/>
    <property type="evidence" value="ECO:0007669"/>
    <property type="project" value="InterPro"/>
</dbReference>
<dbReference type="GO" id="GO:0042274">
    <property type="term" value="P:ribosomal small subunit biogenesis"/>
    <property type="evidence" value="ECO:0007669"/>
    <property type="project" value="TreeGrafter"/>
</dbReference>
<dbReference type="GO" id="GO:0006412">
    <property type="term" value="P:translation"/>
    <property type="evidence" value="ECO:0007669"/>
    <property type="project" value="UniProtKB-UniRule"/>
</dbReference>
<dbReference type="CDD" id="cd00165">
    <property type="entry name" value="S4"/>
    <property type="match status" value="1"/>
</dbReference>
<dbReference type="FunFam" id="1.10.1050.10:FF:000001">
    <property type="entry name" value="30S ribosomal protein S4"/>
    <property type="match status" value="1"/>
</dbReference>
<dbReference type="FunFam" id="3.10.290.10:FF:000001">
    <property type="entry name" value="30S ribosomal protein S4"/>
    <property type="match status" value="1"/>
</dbReference>
<dbReference type="Gene3D" id="1.10.1050.10">
    <property type="entry name" value="Ribosomal Protein S4 Delta 41, Chain A, domain 1"/>
    <property type="match status" value="1"/>
</dbReference>
<dbReference type="Gene3D" id="3.10.290.10">
    <property type="entry name" value="RNA-binding S4 domain"/>
    <property type="match status" value="1"/>
</dbReference>
<dbReference type="HAMAP" id="MF_01306_B">
    <property type="entry name" value="Ribosomal_uS4_B"/>
    <property type="match status" value="1"/>
</dbReference>
<dbReference type="InterPro" id="IPR022801">
    <property type="entry name" value="Ribosomal_uS4"/>
</dbReference>
<dbReference type="InterPro" id="IPR005709">
    <property type="entry name" value="Ribosomal_uS4_bac-type"/>
</dbReference>
<dbReference type="InterPro" id="IPR018079">
    <property type="entry name" value="Ribosomal_uS4_CS"/>
</dbReference>
<dbReference type="InterPro" id="IPR001912">
    <property type="entry name" value="Ribosomal_uS4_N"/>
</dbReference>
<dbReference type="InterPro" id="IPR002942">
    <property type="entry name" value="S4_RNA-bd"/>
</dbReference>
<dbReference type="InterPro" id="IPR036986">
    <property type="entry name" value="S4_RNA-bd_sf"/>
</dbReference>
<dbReference type="NCBIfam" id="NF003717">
    <property type="entry name" value="PRK05327.1"/>
    <property type="match status" value="1"/>
</dbReference>
<dbReference type="NCBIfam" id="TIGR01017">
    <property type="entry name" value="rpsD_bact"/>
    <property type="match status" value="1"/>
</dbReference>
<dbReference type="PANTHER" id="PTHR11831">
    <property type="entry name" value="30S 40S RIBOSOMAL PROTEIN"/>
    <property type="match status" value="1"/>
</dbReference>
<dbReference type="PANTHER" id="PTHR11831:SF4">
    <property type="entry name" value="SMALL RIBOSOMAL SUBUNIT PROTEIN US4M"/>
    <property type="match status" value="1"/>
</dbReference>
<dbReference type="Pfam" id="PF00163">
    <property type="entry name" value="Ribosomal_S4"/>
    <property type="match status" value="1"/>
</dbReference>
<dbReference type="Pfam" id="PF01479">
    <property type="entry name" value="S4"/>
    <property type="match status" value="1"/>
</dbReference>
<dbReference type="SMART" id="SM01390">
    <property type="entry name" value="Ribosomal_S4"/>
    <property type="match status" value="1"/>
</dbReference>
<dbReference type="SMART" id="SM00363">
    <property type="entry name" value="S4"/>
    <property type="match status" value="1"/>
</dbReference>
<dbReference type="SUPFAM" id="SSF55174">
    <property type="entry name" value="Alpha-L RNA-binding motif"/>
    <property type="match status" value="1"/>
</dbReference>
<dbReference type="PROSITE" id="PS00632">
    <property type="entry name" value="RIBOSOMAL_S4"/>
    <property type="match status" value="1"/>
</dbReference>
<dbReference type="PROSITE" id="PS50889">
    <property type="entry name" value="S4"/>
    <property type="match status" value="1"/>
</dbReference>
<protein>
    <recommendedName>
        <fullName evidence="1">Small ribosomal subunit protein uS4</fullName>
    </recommendedName>
    <alternativeName>
        <fullName evidence="2">30S ribosomal protein S4</fullName>
    </alternativeName>
</protein>